<name>RL7_SHESA</name>
<reference key="1">
    <citation type="submission" date="2006-09" db="EMBL/GenBank/DDBJ databases">
        <title>Complete sequence of chromosome 1 of Shewanella sp. ANA-3.</title>
        <authorList>
            <person name="Copeland A."/>
            <person name="Lucas S."/>
            <person name="Lapidus A."/>
            <person name="Barry K."/>
            <person name="Detter J.C."/>
            <person name="Glavina del Rio T."/>
            <person name="Hammon N."/>
            <person name="Israni S."/>
            <person name="Dalin E."/>
            <person name="Tice H."/>
            <person name="Pitluck S."/>
            <person name="Chertkov O."/>
            <person name="Brettin T."/>
            <person name="Bruce D."/>
            <person name="Han C."/>
            <person name="Tapia R."/>
            <person name="Gilna P."/>
            <person name="Schmutz J."/>
            <person name="Larimer F."/>
            <person name="Land M."/>
            <person name="Hauser L."/>
            <person name="Kyrpides N."/>
            <person name="Kim E."/>
            <person name="Newman D."/>
            <person name="Salticov C."/>
            <person name="Konstantinidis K."/>
            <person name="Klappenback J."/>
            <person name="Tiedje J."/>
            <person name="Richardson P."/>
        </authorList>
    </citation>
    <scope>NUCLEOTIDE SEQUENCE [LARGE SCALE GENOMIC DNA]</scope>
    <source>
        <strain>ANA-3</strain>
    </source>
</reference>
<gene>
    <name evidence="1" type="primary">rplL</name>
    <name type="ordered locus">Shewana3_0191</name>
</gene>
<proteinExistence type="inferred from homology"/>
<comment type="function">
    <text evidence="1">Forms part of the ribosomal stalk which helps the ribosome interact with GTP-bound translation factors. Is thus essential for accurate translation.</text>
</comment>
<comment type="subunit">
    <text evidence="1">Homodimer. Part of the ribosomal stalk of the 50S ribosomal subunit. Forms a multimeric L10(L12)X complex, where L10 forms an elongated spine to which 2 to 4 L12 dimers bind in a sequential fashion. Binds GTP-bound translation factors.</text>
</comment>
<comment type="similarity">
    <text evidence="1">Belongs to the bacterial ribosomal protein bL12 family.</text>
</comment>
<protein>
    <recommendedName>
        <fullName evidence="1">Large ribosomal subunit protein bL12</fullName>
    </recommendedName>
    <alternativeName>
        <fullName evidence="2">50S ribosomal protein L7/L12</fullName>
    </alternativeName>
</protein>
<evidence type="ECO:0000255" key="1">
    <source>
        <dbReference type="HAMAP-Rule" id="MF_00368"/>
    </source>
</evidence>
<evidence type="ECO:0000305" key="2"/>
<keyword id="KW-0687">Ribonucleoprotein</keyword>
<keyword id="KW-0689">Ribosomal protein</keyword>
<accession>A0KRL6</accession>
<dbReference type="EMBL" id="CP000469">
    <property type="protein sequence ID" value="ABK46435.1"/>
    <property type="molecule type" value="Genomic_DNA"/>
</dbReference>
<dbReference type="RefSeq" id="WP_011624800.1">
    <property type="nucleotide sequence ID" value="NC_008577.1"/>
</dbReference>
<dbReference type="SMR" id="A0KRL6"/>
<dbReference type="STRING" id="94122.Shewana3_0191"/>
<dbReference type="GeneID" id="94726178"/>
<dbReference type="KEGG" id="shn:Shewana3_0191"/>
<dbReference type="eggNOG" id="COG0222">
    <property type="taxonomic scope" value="Bacteria"/>
</dbReference>
<dbReference type="HOGENOM" id="CLU_086499_3_2_6"/>
<dbReference type="OrthoDB" id="9811748at2"/>
<dbReference type="Proteomes" id="UP000002589">
    <property type="component" value="Chromosome"/>
</dbReference>
<dbReference type="GO" id="GO:0022625">
    <property type="term" value="C:cytosolic large ribosomal subunit"/>
    <property type="evidence" value="ECO:0007669"/>
    <property type="project" value="TreeGrafter"/>
</dbReference>
<dbReference type="GO" id="GO:0003729">
    <property type="term" value="F:mRNA binding"/>
    <property type="evidence" value="ECO:0007669"/>
    <property type="project" value="TreeGrafter"/>
</dbReference>
<dbReference type="GO" id="GO:0003735">
    <property type="term" value="F:structural constituent of ribosome"/>
    <property type="evidence" value="ECO:0007669"/>
    <property type="project" value="InterPro"/>
</dbReference>
<dbReference type="GO" id="GO:0006412">
    <property type="term" value="P:translation"/>
    <property type="evidence" value="ECO:0007669"/>
    <property type="project" value="UniProtKB-UniRule"/>
</dbReference>
<dbReference type="CDD" id="cd00387">
    <property type="entry name" value="Ribosomal_L7_L12"/>
    <property type="match status" value="1"/>
</dbReference>
<dbReference type="FunFam" id="1.20.5.710:FF:000001">
    <property type="entry name" value="50S ribosomal protein L7/L12"/>
    <property type="match status" value="1"/>
</dbReference>
<dbReference type="FunFam" id="3.30.1390.10:FF:000001">
    <property type="entry name" value="50S ribosomal protein L7/L12"/>
    <property type="match status" value="1"/>
</dbReference>
<dbReference type="Gene3D" id="3.30.1390.10">
    <property type="match status" value="1"/>
</dbReference>
<dbReference type="Gene3D" id="1.20.5.710">
    <property type="entry name" value="Single helix bin"/>
    <property type="match status" value="1"/>
</dbReference>
<dbReference type="HAMAP" id="MF_00368">
    <property type="entry name" value="Ribosomal_bL12"/>
    <property type="match status" value="1"/>
</dbReference>
<dbReference type="InterPro" id="IPR000206">
    <property type="entry name" value="Ribosomal_bL12"/>
</dbReference>
<dbReference type="InterPro" id="IPR013823">
    <property type="entry name" value="Ribosomal_bL12_C"/>
</dbReference>
<dbReference type="InterPro" id="IPR014719">
    <property type="entry name" value="Ribosomal_bL12_C/ClpS-like"/>
</dbReference>
<dbReference type="InterPro" id="IPR008932">
    <property type="entry name" value="Ribosomal_bL12_oligo"/>
</dbReference>
<dbReference type="InterPro" id="IPR036235">
    <property type="entry name" value="Ribosomal_bL12_oligo_N_sf"/>
</dbReference>
<dbReference type="NCBIfam" id="TIGR00855">
    <property type="entry name" value="L12"/>
    <property type="match status" value="1"/>
</dbReference>
<dbReference type="PANTHER" id="PTHR45987">
    <property type="entry name" value="39S RIBOSOMAL PROTEIN L12"/>
    <property type="match status" value="1"/>
</dbReference>
<dbReference type="PANTHER" id="PTHR45987:SF4">
    <property type="entry name" value="LARGE RIBOSOMAL SUBUNIT PROTEIN BL12M"/>
    <property type="match status" value="1"/>
</dbReference>
<dbReference type="Pfam" id="PF00542">
    <property type="entry name" value="Ribosomal_L12"/>
    <property type="match status" value="1"/>
</dbReference>
<dbReference type="Pfam" id="PF16320">
    <property type="entry name" value="Ribosomal_L12_N"/>
    <property type="match status" value="1"/>
</dbReference>
<dbReference type="SUPFAM" id="SSF54736">
    <property type="entry name" value="ClpS-like"/>
    <property type="match status" value="1"/>
</dbReference>
<dbReference type="SUPFAM" id="SSF48300">
    <property type="entry name" value="Ribosomal protein L7/12, oligomerisation (N-terminal) domain"/>
    <property type="match status" value="1"/>
</dbReference>
<sequence>MSITKDQILEAFAAMSVMEVVELIEAMEEKFGVSAAAAVVAGGAADAGAAAEEQTEFTVMLTAHGDNKVAVIKAIRGATGLGLKEAKAMSEAAPVAVKEGVSKEEAEALKKELVEAGATVEIK</sequence>
<feature type="chain" id="PRO_1000007086" description="Large ribosomal subunit protein bL12">
    <location>
        <begin position="1"/>
        <end position="123"/>
    </location>
</feature>
<organism>
    <name type="scientific">Shewanella sp. (strain ANA-3)</name>
    <dbReference type="NCBI Taxonomy" id="94122"/>
    <lineage>
        <taxon>Bacteria</taxon>
        <taxon>Pseudomonadati</taxon>
        <taxon>Pseudomonadota</taxon>
        <taxon>Gammaproteobacteria</taxon>
        <taxon>Alteromonadales</taxon>
        <taxon>Shewanellaceae</taxon>
        <taxon>Shewanella</taxon>
    </lineage>
</organism>